<dbReference type="EMBL" id="X03342">
    <property type="protein sequence ID" value="CAA27048.1"/>
    <property type="molecule type" value="mRNA"/>
</dbReference>
<dbReference type="EMBL" id="AB061831">
    <property type="protein sequence ID" value="BAB79469.1"/>
    <property type="molecule type" value="Genomic_DNA"/>
</dbReference>
<dbReference type="EMBL" id="AF370435">
    <property type="protein sequence ID" value="AAQ15271.1"/>
    <property type="molecule type" value="mRNA"/>
</dbReference>
<dbReference type="EMBL" id="AK311909">
    <property type="protein sequence ID" value="BAG34850.1"/>
    <property type="molecule type" value="mRNA"/>
</dbReference>
<dbReference type="EMBL" id="CH471055">
    <property type="protein sequence ID" value="EAW64144.1"/>
    <property type="molecule type" value="Genomic_DNA"/>
</dbReference>
<dbReference type="EMBL" id="BC011514">
    <property type="protein sequence ID" value="AAH11514.1"/>
    <property type="molecule type" value="mRNA"/>
</dbReference>
<dbReference type="EMBL" id="BC070209">
    <property type="protein sequence ID" value="AAH70209.1"/>
    <property type="molecule type" value="mRNA"/>
</dbReference>
<dbReference type="CCDS" id="CCDS2614.1"/>
<dbReference type="PIR" id="S11393">
    <property type="entry name" value="R5HU32"/>
</dbReference>
<dbReference type="RefSeq" id="NP_000985.1">
    <property type="nucleotide sequence ID" value="NM_000994.4"/>
</dbReference>
<dbReference type="RefSeq" id="NP_001007074.1">
    <property type="nucleotide sequence ID" value="NM_001007073.1"/>
</dbReference>
<dbReference type="RefSeq" id="NP_001007075.1">
    <property type="nucleotide sequence ID" value="NM_001007074.1"/>
</dbReference>
<dbReference type="PDB" id="4UG0">
    <property type="method" value="EM"/>
    <property type="chains" value="Le=1-135"/>
</dbReference>
<dbReference type="PDB" id="4V6X">
    <property type="method" value="EM"/>
    <property type="resolution" value="5.00 A"/>
    <property type="chains" value="Ce=1-135"/>
</dbReference>
<dbReference type="PDB" id="5AJ0">
    <property type="method" value="EM"/>
    <property type="resolution" value="3.50 A"/>
    <property type="chains" value="Ae=1-135"/>
</dbReference>
<dbReference type="PDB" id="5LKS">
    <property type="method" value="EM"/>
    <property type="resolution" value="3.60 A"/>
    <property type="chains" value="Le=1-135"/>
</dbReference>
<dbReference type="PDB" id="5T2C">
    <property type="method" value="EM"/>
    <property type="resolution" value="3.60 A"/>
    <property type="chains" value="Y=1-135"/>
</dbReference>
<dbReference type="PDB" id="6IP5">
    <property type="method" value="EM"/>
    <property type="resolution" value="3.90 A"/>
    <property type="chains" value="2Y=1-135"/>
</dbReference>
<dbReference type="PDB" id="6IP6">
    <property type="method" value="EM"/>
    <property type="resolution" value="4.50 A"/>
    <property type="chains" value="2Y=1-135"/>
</dbReference>
<dbReference type="PDB" id="6IP8">
    <property type="method" value="EM"/>
    <property type="resolution" value="3.90 A"/>
    <property type="chains" value="2Y=1-135"/>
</dbReference>
<dbReference type="PDB" id="6LQM">
    <property type="method" value="EM"/>
    <property type="resolution" value="3.09 A"/>
    <property type="chains" value="t=1-135"/>
</dbReference>
<dbReference type="PDB" id="6LSR">
    <property type="method" value="EM"/>
    <property type="resolution" value="3.13 A"/>
    <property type="chains" value="t=1-135"/>
</dbReference>
<dbReference type="PDB" id="6LSS">
    <property type="method" value="EM"/>
    <property type="resolution" value="3.23 A"/>
    <property type="chains" value="k=1-135"/>
</dbReference>
<dbReference type="PDB" id="6LU8">
    <property type="method" value="EM"/>
    <property type="resolution" value="3.13 A"/>
    <property type="chains" value="k=1-135"/>
</dbReference>
<dbReference type="PDB" id="6OLE">
    <property type="method" value="EM"/>
    <property type="resolution" value="3.10 A"/>
    <property type="chains" value="f=2-130"/>
</dbReference>
<dbReference type="PDB" id="6OLF">
    <property type="method" value="EM"/>
    <property type="resolution" value="3.90 A"/>
    <property type="chains" value="f=2-130"/>
</dbReference>
<dbReference type="PDB" id="6OLG">
    <property type="method" value="EM"/>
    <property type="resolution" value="3.40 A"/>
    <property type="chains" value="Ae=2-130"/>
</dbReference>
<dbReference type="PDB" id="6OLI">
    <property type="method" value="EM"/>
    <property type="resolution" value="3.50 A"/>
    <property type="chains" value="f=2-130"/>
</dbReference>
<dbReference type="PDB" id="6OLZ">
    <property type="method" value="EM"/>
    <property type="resolution" value="3.90 A"/>
    <property type="chains" value="Ae=2-130"/>
</dbReference>
<dbReference type="PDB" id="6OM0">
    <property type="method" value="EM"/>
    <property type="resolution" value="3.10 A"/>
    <property type="chains" value="f=2-130"/>
</dbReference>
<dbReference type="PDB" id="6OM7">
    <property type="method" value="EM"/>
    <property type="resolution" value="3.70 A"/>
    <property type="chains" value="f=2-130"/>
</dbReference>
<dbReference type="PDB" id="6QZP">
    <property type="method" value="EM"/>
    <property type="resolution" value="2.90 A"/>
    <property type="chains" value="Le=2-129"/>
</dbReference>
<dbReference type="PDB" id="6W6L">
    <property type="method" value="EM"/>
    <property type="resolution" value="3.84 A"/>
    <property type="chains" value="f=1-135"/>
</dbReference>
<dbReference type="PDB" id="6XA1">
    <property type="method" value="EM"/>
    <property type="resolution" value="2.80 A"/>
    <property type="chains" value="Le=2-129"/>
</dbReference>
<dbReference type="PDB" id="6Y0G">
    <property type="method" value="EM"/>
    <property type="resolution" value="3.20 A"/>
    <property type="chains" value="Le=1-135"/>
</dbReference>
<dbReference type="PDB" id="6Y2L">
    <property type="method" value="EM"/>
    <property type="resolution" value="3.00 A"/>
    <property type="chains" value="Le=1-135"/>
</dbReference>
<dbReference type="PDB" id="6Y57">
    <property type="method" value="EM"/>
    <property type="resolution" value="3.50 A"/>
    <property type="chains" value="Le=1-135"/>
</dbReference>
<dbReference type="PDB" id="6Y6X">
    <property type="method" value="EM"/>
    <property type="resolution" value="2.80 A"/>
    <property type="chains" value="Le=2-129"/>
</dbReference>
<dbReference type="PDB" id="6Z6L">
    <property type="method" value="EM"/>
    <property type="resolution" value="3.00 A"/>
    <property type="chains" value="Le=1-135"/>
</dbReference>
<dbReference type="PDB" id="6Z6M">
    <property type="method" value="EM"/>
    <property type="resolution" value="3.10 A"/>
    <property type="chains" value="Le=1-135"/>
</dbReference>
<dbReference type="PDB" id="6Z6N">
    <property type="method" value="EM"/>
    <property type="resolution" value="2.90 A"/>
    <property type="chains" value="Le=1-135"/>
</dbReference>
<dbReference type="PDB" id="6ZM7">
    <property type="method" value="EM"/>
    <property type="resolution" value="2.70 A"/>
    <property type="chains" value="Le=1-135"/>
</dbReference>
<dbReference type="PDB" id="6ZME">
    <property type="method" value="EM"/>
    <property type="resolution" value="3.00 A"/>
    <property type="chains" value="Le=1-135"/>
</dbReference>
<dbReference type="PDB" id="6ZMI">
    <property type="method" value="EM"/>
    <property type="resolution" value="2.60 A"/>
    <property type="chains" value="Le=1-135"/>
</dbReference>
<dbReference type="PDB" id="6ZMO">
    <property type="method" value="EM"/>
    <property type="resolution" value="3.10 A"/>
    <property type="chains" value="Le=1-135"/>
</dbReference>
<dbReference type="PDB" id="7BHP">
    <property type="method" value="EM"/>
    <property type="resolution" value="3.30 A"/>
    <property type="chains" value="Le=1-135"/>
</dbReference>
<dbReference type="PDB" id="7F5S">
    <property type="method" value="EM"/>
    <property type="resolution" value="2.72 A"/>
    <property type="chains" value="Le=1-135"/>
</dbReference>
<dbReference type="PDB" id="7OW7">
    <property type="method" value="EM"/>
    <property type="resolution" value="2.20 A"/>
    <property type="chains" value="Y=1-135"/>
</dbReference>
<dbReference type="PDB" id="7QVP">
    <property type="method" value="EM"/>
    <property type="resolution" value="3.00 A"/>
    <property type="chains" value="Le/Me=1-135"/>
</dbReference>
<dbReference type="PDB" id="7XNX">
    <property type="method" value="EM"/>
    <property type="resolution" value="2.70 A"/>
    <property type="chains" value="Le=1-135"/>
</dbReference>
<dbReference type="PDB" id="7XNY">
    <property type="method" value="EM"/>
    <property type="resolution" value="2.50 A"/>
    <property type="chains" value="Le=1-135"/>
</dbReference>
<dbReference type="PDB" id="8A3D">
    <property type="method" value="EM"/>
    <property type="resolution" value="1.67 A"/>
    <property type="chains" value="Y=1-135"/>
</dbReference>
<dbReference type="PDB" id="8FKP">
    <property type="method" value="EM"/>
    <property type="resolution" value="2.85 A"/>
    <property type="chains" value="LQ=1-135"/>
</dbReference>
<dbReference type="PDB" id="8FKQ">
    <property type="method" value="EM"/>
    <property type="resolution" value="2.76 A"/>
    <property type="chains" value="LQ=1-135"/>
</dbReference>
<dbReference type="PDB" id="8FKR">
    <property type="method" value="EM"/>
    <property type="resolution" value="2.89 A"/>
    <property type="chains" value="LQ=1-135"/>
</dbReference>
<dbReference type="PDB" id="8FKS">
    <property type="method" value="EM"/>
    <property type="resolution" value="2.88 A"/>
    <property type="chains" value="LQ=1-135"/>
</dbReference>
<dbReference type="PDB" id="8FKT">
    <property type="method" value="EM"/>
    <property type="resolution" value="2.81 A"/>
    <property type="chains" value="LQ=1-135"/>
</dbReference>
<dbReference type="PDB" id="8FKU">
    <property type="method" value="EM"/>
    <property type="resolution" value="2.82 A"/>
    <property type="chains" value="LQ=1-135"/>
</dbReference>
<dbReference type="PDB" id="8FKV">
    <property type="method" value="EM"/>
    <property type="resolution" value="2.47 A"/>
    <property type="chains" value="LQ=1-135"/>
</dbReference>
<dbReference type="PDB" id="8FKW">
    <property type="method" value="EM"/>
    <property type="resolution" value="2.50 A"/>
    <property type="chains" value="LQ=1-135"/>
</dbReference>
<dbReference type="PDB" id="8FKX">
    <property type="method" value="EM"/>
    <property type="resolution" value="2.59 A"/>
    <property type="chains" value="LQ=1-135"/>
</dbReference>
<dbReference type="PDB" id="8FKY">
    <property type="method" value="EM"/>
    <property type="resolution" value="2.67 A"/>
    <property type="chains" value="LQ=1-135"/>
</dbReference>
<dbReference type="PDB" id="8FKZ">
    <property type="method" value="EM"/>
    <property type="resolution" value="3.04 A"/>
    <property type="chains" value="LQ=1-135"/>
</dbReference>
<dbReference type="PDB" id="8FL0">
    <property type="method" value="EM"/>
    <property type="resolution" value="2.91 A"/>
    <property type="chains" value="LQ=1-135"/>
</dbReference>
<dbReference type="PDB" id="8FL2">
    <property type="method" value="EM"/>
    <property type="resolution" value="2.67 A"/>
    <property type="chains" value="LQ=1-135"/>
</dbReference>
<dbReference type="PDB" id="8FL3">
    <property type="method" value="EM"/>
    <property type="resolution" value="2.53 A"/>
    <property type="chains" value="LQ=1-135"/>
</dbReference>
<dbReference type="PDB" id="8FL4">
    <property type="method" value="EM"/>
    <property type="resolution" value="2.89 A"/>
    <property type="chains" value="LQ=1-135"/>
</dbReference>
<dbReference type="PDB" id="8FL6">
    <property type="method" value="EM"/>
    <property type="resolution" value="2.62 A"/>
    <property type="chains" value="LQ=1-135"/>
</dbReference>
<dbReference type="PDB" id="8FL7">
    <property type="method" value="EM"/>
    <property type="resolution" value="2.55 A"/>
    <property type="chains" value="LQ=1-135"/>
</dbReference>
<dbReference type="PDB" id="8FL9">
    <property type="method" value="EM"/>
    <property type="resolution" value="2.75 A"/>
    <property type="chains" value="LQ=1-135"/>
</dbReference>
<dbReference type="PDB" id="8FLA">
    <property type="method" value="EM"/>
    <property type="resolution" value="2.63 A"/>
    <property type="chains" value="LQ=1-135"/>
</dbReference>
<dbReference type="PDB" id="8FLB">
    <property type="method" value="EM"/>
    <property type="resolution" value="2.55 A"/>
    <property type="chains" value="LQ=1-135"/>
</dbReference>
<dbReference type="PDB" id="8FLC">
    <property type="method" value="EM"/>
    <property type="resolution" value="2.76 A"/>
    <property type="chains" value="LQ=1-135"/>
</dbReference>
<dbReference type="PDB" id="8FLD">
    <property type="method" value="EM"/>
    <property type="resolution" value="2.58 A"/>
    <property type="chains" value="LQ=1-135"/>
</dbReference>
<dbReference type="PDB" id="8FLE">
    <property type="method" value="EM"/>
    <property type="resolution" value="2.48 A"/>
    <property type="chains" value="LQ=1-135"/>
</dbReference>
<dbReference type="PDB" id="8FLF">
    <property type="method" value="EM"/>
    <property type="resolution" value="2.65 A"/>
    <property type="chains" value="LQ=1-135"/>
</dbReference>
<dbReference type="PDB" id="8G5Y">
    <property type="method" value="EM"/>
    <property type="resolution" value="2.29 A"/>
    <property type="chains" value="Le=1-135"/>
</dbReference>
<dbReference type="PDB" id="8G5Z">
    <property type="method" value="EM"/>
    <property type="resolution" value="2.64 A"/>
    <property type="chains" value="Le=2-129"/>
</dbReference>
<dbReference type="PDB" id="8G60">
    <property type="method" value="EM"/>
    <property type="resolution" value="2.54 A"/>
    <property type="chains" value="Le=1-135"/>
</dbReference>
<dbReference type="PDB" id="8G61">
    <property type="method" value="EM"/>
    <property type="resolution" value="2.94 A"/>
    <property type="chains" value="Le=1-135"/>
</dbReference>
<dbReference type="PDB" id="8G6J">
    <property type="method" value="EM"/>
    <property type="resolution" value="2.80 A"/>
    <property type="chains" value="Le=1-135"/>
</dbReference>
<dbReference type="PDB" id="8GLP">
    <property type="method" value="EM"/>
    <property type="resolution" value="1.67 A"/>
    <property type="chains" value="Le=1-135"/>
</dbReference>
<dbReference type="PDB" id="8IDT">
    <property type="method" value="EM"/>
    <property type="resolution" value="2.80 A"/>
    <property type="chains" value="k=1-135"/>
</dbReference>
<dbReference type="PDB" id="8IDY">
    <property type="method" value="EM"/>
    <property type="resolution" value="3.00 A"/>
    <property type="chains" value="k=1-135"/>
</dbReference>
<dbReference type="PDB" id="8IE3">
    <property type="method" value="EM"/>
    <property type="resolution" value="3.30 A"/>
    <property type="chains" value="k=1-135"/>
</dbReference>
<dbReference type="PDB" id="8IFD">
    <property type="method" value="EM"/>
    <property type="resolution" value="2.59 A"/>
    <property type="chains" value="2Y=1-135"/>
</dbReference>
<dbReference type="PDB" id="8IFE">
    <property type="method" value="EM"/>
    <property type="resolution" value="2.57 A"/>
    <property type="chains" value="2Y=1-135"/>
</dbReference>
<dbReference type="PDB" id="8INE">
    <property type="method" value="EM"/>
    <property type="resolution" value="3.20 A"/>
    <property type="chains" value="k=1-135"/>
</dbReference>
<dbReference type="PDB" id="8INF">
    <property type="method" value="EM"/>
    <property type="resolution" value="3.00 A"/>
    <property type="chains" value="k=1-135"/>
</dbReference>
<dbReference type="PDB" id="8INK">
    <property type="method" value="EM"/>
    <property type="resolution" value="3.20 A"/>
    <property type="chains" value="k=1-135"/>
</dbReference>
<dbReference type="PDB" id="8IPD">
    <property type="method" value="EM"/>
    <property type="resolution" value="3.20 A"/>
    <property type="chains" value="k=1-135"/>
</dbReference>
<dbReference type="PDB" id="8IPX">
    <property type="method" value="EM"/>
    <property type="resolution" value="4.30 A"/>
    <property type="chains" value="k=1-135"/>
</dbReference>
<dbReference type="PDB" id="8IPY">
    <property type="method" value="EM"/>
    <property type="resolution" value="3.20 A"/>
    <property type="chains" value="k=1-135"/>
</dbReference>
<dbReference type="PDB" id="8IR1">
    <property type="method" value="EM"/>
    <property type="resolution" value="3.30 A"/>
    <property type="chains" value="k=1-135"/>
</dbReference>
<dbReference type="PDB" id="8IR3">
    <property type="method" value="EM"/>
    <property type="resolution" value="3.50 A"/>
    <property type="chains" value="k=1-135"/>
</dbReference>
<dbReference type="PDB" id="8JDJ">
    <property type="method" value="EM"/>
    <property type="resolution" value="2.50 A"/>
    <property type="chains" value="j=1-135"/>
</dbReference>
<dbReference type="PDB" id="8JDK">
    <property type="method" value="EM"/>
    <property type="resolution" value="2.26 A"/>
    <property type="chains" value="j=1-135"/>
</dbReference>
<dbReference type="PDB" id="8JDL">
    <property type="method" value="EM"/>
    <property type="resolution" value="2.42 A"/>
    <property type="chains" value="j=1-135"/>
</dbReference>
<dbReference type="PDB" id="8JDM">
    <property type="method" value="EM"/>
    <property type="resolution" value="2.67 A"/>
    <property type="chains" value="j=1-135"/>
</dbReference>
<dbReference type="PDB" id="8K2C">
    <property type="method" value="EM"/>
    <property type="resolution" value="2.40 A"/>
    <property type="chains" value="Le=1-135"/>
</dbReference>
<dbReference type="PDB" id="8OHD">
    <property type="method" value="EM"/>
    <property type="resolution" value="3.10 A"/>
    <property type="chains" value="Le=1-135"/>
</dbReference>
<dbReference type="PDB" id="8OJ0">
    <property type="method" value="EM"/>
    <property type="resolution" value="3.30 A"/>
    <property type="chains" value="Le=1-135"/>
</dbReference>
<dbReference type="PDB" id="8OJ5">
    <property type="method" value="EM"/>
    <property type="resolution" value="2.90 A"/>
    <property type="chains" value="Le=1-135"/>
</dbReference>
<dbReference type="PDB" id="8OJ8">
    <property type="method" value="EM"/>
    <property type="resolution" value="3.30 A"/>
    <property type="chains" value="Le=1-135"/>
</dbReference>
<dbReference type="PDB" id="8QFD">
    <property type="method" value="EM"/>
    <property type="resolution" value="2.20 A"/>
    <property type="chains" value="e=1-135"/>
</dbReference>
<dbReference type="PDB" id="8QOI">
    <property type="method" value="EM"/>
    <property type="resolution" value="1.90 A"/>
    <property type="chains" value="Le=1-135"/>
</dbReference>
<dbReference type="PDB" id="8QYX">
    <property type="method" value="EM"/>
    <property type="resolution" value="1.78 A"/>
    <property type="chains" value="Y1=1-135"/>
</dbReference>
<dbReference type="PDB" id="8RL2">
    <property type="method" value="EM"/>
    <property type="resolution" value="2.84 A"/>
    <property type="chains" value="Le=1-135"/>
</dbReference>
<dbReference type="PDB" id="8UKB">
    <property type="method" value="EM"/>
    <property type="resolution" value="3.05 A"/>
    <property type="chains" value="Le=2-129"/>
</dbReference>
<dbReference type="PDB" id="8XSX">
    <property type="method" value="EM"/>
    <property type="resolution" value="2.40 A"/>
    <property type="chains" value="Le=1-135"/>
</dbReference>
<dbReference type="PDB" id="8XSY">
    <property type="method" value="EM"/>
    <property type="resolution" value="3.00 A"/>
    <property type="chains" value="Le=1-135"/>
</dbReference>
<dbReference type="PDB" id="8XSZ">
    <property type="method" value="EM"/>
    <property type="resolution" value="3.20 A"/>
    <property type="chains" value="Le=1-135"/>
</dbReference>
<dbReference type="PDB" id="8Y0W">
    <property type="method" value="EM"/>
    <property type="resolution" value="3.40 A"/>
    <property type="chains" value="Le=1-135"/>
</dbReference>
<dbReference type="PDB" id="8Y0X">
    <property type="method" value="EM"/>
    <property type="resolution" value="3.30 A"/>
    <property type="chains" value="Le=1-135"/>
</dbReference>
<dbReference type="PDB" id="8YOO">
    <property type="method" value="EM"/>
    <property type="resolution" value="2.00 A"/>
    <property type="chains" value="Le=1-135"/>
</dbReference>
<dbReference type="PDB" id="8YOP">
    <property type="method" value="EM"/>
    <property type="resolution" value="2.20 A"/>
    <property type="chains" value="Le=1-135"/>
</dbReference>
<dbReference type="PDB" id="9C3H">
    <property type="method" value="EM"/>
    <property type="resolution" value="2.00 A"/>
    <property type="chains" value="LI=1-135"/>
</dbReference>
<dbReference type="PDB" id="9G8M">
    <property type="method" value="EM"/>
    <property type="resolution" value="3.30 A"/>
    <property type="chains" value="Le=1-135"/>
</dbReference>
<dbReference type="PDB" id="9GMO">
    <property type="method" value="EM"/>
    <property type="resolution" value="2.59 A"/>
    <property type="chains" value="Y=1-135"/>
</dbReference>
<dbReference type="PDBsum" id="4UG0"/>
<dbReference type="PDBsum" id="4V6X"/>
<dbReference type="PDBsum" id="5AJ0"/>
<dbReference type="PDBsum" id="5LKS"/>
<dbReference type="PDBsum" id="5T2C"/>
<dbReference type="PDBsum" id="6IP5"/>
<dbReference type="PDBsum" id="6IP6"/>
<dbReference type="PDBsum" id="6IP8"/>
<dbReference type="PDBsum" id="6LQM"/>
<dbReference type="PDBsum" id="6LSR"/>
<dbReference type="PDBsum" id="6LSS"/>
<dbReference type="PDBsum" id="6LU8"/>
<dbReference type="PDBsum" id="6OLE"/>
<dbReference type="PDBsum" id="6OLF"/>
<dbReference type="PDBsum" id="6OLG"/>
<dbReference type="PDBsum" id="6OLI"/>
<dbReference type="PDBsum" id="6OLZ"/>
<dbReference type="PDBsum" id="6OM0"/>
<dbReference type="PDBsum" id="6OM7"/>
<dbReference type="PDBsum" id="6QZP"/>
<dbReference type="PDBsum" id="6W6L"/>
<dbReference type="PDBsum" id="6XA1"/>
<dbReference type="PDBsum" id="6Y0G"/>
<dbReference type="PDBsum" id="6Y2L"/>
<dbReference type="PDBsum" id="6Y57"/>
<dbReference type="PDBsum" id="6Y6X"/>
<dbReference type="PDBsum" id="6Z6L"/>
<dbReference type="PDBsum" id="6Z6M"/>
<dbReference type="PDBsum" id="6Z6N"/>
<dbReference type="PDBsum" id="6ZM7"/>
<dbReference type="PDBsum" id="6ZME"/>
<dbReference type="PDBsum" id="6ZMI"/>
<dbReference type="PDBsum" id="6ZMO"/>
<dbReference type="PDBsum" id="7BHP"/>
<dbReference type="PDBsum" id="7F5S"/>
<dbReference type="PDBsum" id="7OW7"/>
<dbReference type="PDBsum" id="7QVP"/>
<dbReference type="PDBsum" id="7XNX"/>
<dbReference type="PDBsum" id="7XNY"/>
<dbReference type="PDBsum" id="8A3D"/>
<dbReference type="PDBsum" id="8FKP"/>
<dbReference type="PDBsum" id="8FKQ"/>
<dbReference type="PDBsum" id="8FKR"/>
<dbReference type="PDBsum" id="8FKS"/>
<dbReference type="PDBsum" id="8FKT"/>
<dbReference type="PDBsum" id="8FKU"/>
<dbReference type="PDBsum" id="8FKV"/>
<dbReference type="PDBsum" id="8FKW"/>
<dbReference type="PDBsum" id="8FKX"/>
<dbReference type="PDBsum" id="8FKY"/>
<dbReference type="PDBsum" id="8FKZ"/>
<dbReference type="PDBsum" id="8FL0"/>
<dbReference type="PDBsum" id="8FL2"/>
<dbReference type="PDBsum" id="8FL3"/>
<dbReference type="PDBsum" id="8FL4"/>
<dbReference type="PDBsum" id="8FL6"/>
<dbReference type="PDBsum" id="8FL7"/>
<dbReference type="PDBsum" id="8FL9"/>
<dbReference type="PDBsum" id="8FLA"/>
<dbReference type="PDBsum" id="8FLB"/>
<dbReference type="PDBsum" id="8FLC"/>
<dbReference type="PDBsum" id="8FLD"/>
<dbReference type="PDBsum" id="8FLE"/>
<dbReference type="PDBsum" id="8FLF"/>
<dbReference type="PDBsum" id="8G5Y"/>
<dbReference type="PDBsum" id="8G5Z"/>
<dbReference type="PDBsum" id="8G60"/>
<dbReference type="PDBsum" id="8G61"/>
<dbReference type="PDBsum" id="8G6J"/>
<dbReference type="PDBsum" id="8GLP"/>
<dbReference type="PDBsum" id="8IDT"/>
<dbReference type="PDBsum" id="8IDY"/>
<dbReference type="PDBsum" id="8IE3"/>
<dbReference type="PDBsum" id="8IFD"/>
<dbReference type="PDBsum" id="8IFE"/>
<dbReference type="PDBsum" id="8INE"/>
<dbReference type="PDBsum" id="8INF"/>
<dbReference type="PDBsum" id="8INK"/>
<dbReference type="PDBsum" id="8IPD"/>
<dbReference type="PDBsum" id="8IPX"/>
<dbReference type="PDBsum" id="8IPY"/>
<dbReference type="PDBsum" id="8IR1"/>
<dbReference type="PDBsum" id="8IR3"/>
<dbReference type="PDBsum" id="8JDJ"/>
<dbReference type="PDBsum" id="8JDK"/>
<dbReference type="PDBsum" id="8JDL"/>
<dbReference type="PDBsum" id="8JDM"/>
<dbReference type="PDBsum" id="8K2C"/>
<dbReference type="PDBsum" id="8OHD"/>
<dbReference type="PDBsum" id="8OJ0"/>
<dbReference type="PDBsum" id="8OJ5"/>
<dbReference type="PDBsum" id="8OJ8"/>
<dbReference type="PDBsum" id="8QFD"/>
<dbReference type="PDBsum" id="8QOI"/>
<dbReference type="PDBsum" id="8QYX"/>
<dbReference type="PDBsum" id="8RL2"/>
<dbReference type="PDBsum" id="8UKB"/>
<dbReference type="PDBsum" id="8XSX"/>
<dbReference type="PDBsum" id="8XSY"/>
<dbReference type="PDBsum" id="8XSZ"/>
<dbReference type="PDBsum" id="8Y0W"/>
<dbReference type="PDBsum" id="8Y0X"/>
<dbReference type="PDBsum" id="8YOO"/>
<dbReference type="PDBsum" id="8YOP"/>
<dbReference type="PDBsum" id="9C3H"/>
<dbReference type="PDBsum" id="9G8M"/>
<dbReference type="PDBsum" id="9GMO"/>
<dbReference type="EMDB" id="EMD-0948"/>
<dbReference type="EMDB" id="EMD-0963"/>
<dbReference type="EMDB" id="EMD-0964"/>
<dbReference type="EMDB" id="EMD-0978"/>
<dbReference type="EMDB" id="EMD-10668"/>
<dbReference type="EMDB" id="EMD-10674"/>
<dbReference type="EMDB" id="EMD-10690"/>
<dbReference type="EMDB" id="EMD-10709"/>
<dbReference type="EMDB" id="EMD-11098"/>
<dbReference type="EMDB" id="EMD-11099"/>
<dbReference type="EMDB" id="EMD-11100"/>
<dbReference type="EMDB" id="EMD-11288"/>
<dbReference type="EMDB" id="EMD-11289"/>
<dbReference type="EMDB" id="EMD-11292"/>
<dbReference type="EMDB" id="EMD-11299"/>
<dbReference type="EMDB" id="EMD-12189"/>
<dbReference type="EMDB" id="EMD-13094"/>
<dbReference type="EMDB" id="EMD-14181"/>
<dbReference type="EMDB" id="EMD-15113"/>
<dbReference type="EMDB" id="EMD-16880"/>
<dbReference type="EMDB" id="EMD-16902"/>
<dbReference type="EMDB" id="EMD-16905"/>
<dbReference type="EMDB" id="EMD-16908"/>
<dbReference type="EMDB" id="EMD-18382"/>
<dbReference type="EMDB" id="EMD-18539"/>
<dbReference type="EMDB" id="EMD-18765"/>
<dbReference type="EMDB" id="EMD-19330"/>
<dbReference type="EMDB" id="EMD-29252"/>
<dbReference type="EMDB" id="EMD-29253"/>
<dbReference type="EMDB" id="EMD-29254"/>
<dbReference type="EMDB" id="EMD-29255"/>
<dbReference type="EMDB" id="EMD-29256"/>
<dbReference type="EMDB" id="EMD-29257"/>
<dbReference type="EMDB" id="EMD-29258"/>
<dbReference type="EMDB" id="EMD-29259"/>
<dbReference type="EMDB" id="EMD-29260"/>
<dbReference type="EMDB" id="EMD-29261"/>
<dbReference type="EMDB" id="EMD-29262"/>
<dbReference type="EMDB" id="EMD-29263"/>
<dbReference type="EMDB" id="EMD-29265"/>
<dbReference type="EMDB" id="EMD-29266"/>
<dbReference type="EMDB" id="EMD-29267"/>
<dbReference type="EMDB" id="EMD-29268"/>
<dbReference type="EMDB" id="EMD-29269"/>
<dbReference type="EMDB" id="EMD-29271"/>
<dbReference type="EMDB" id="EMD-29272"/>
<dbReference type="EMDB" id="EMD-29273"/>
<dbReference type="EMDB" id="EMD-29274"/>
<dbReference type="EMDB" id="EMD-29275"/>
<dbReference type="EMDB" id="EMD-29276"/>
<dbReference type="EMDB" id="EMD-29277"/>
<dbReference type="EMDB" id="EMD-29757"/>
<dbReference type="EMDB" id="EMD-29758"/>
<dbReference type="EMDB" id="EMD-29759"/>
<dbReference type="EMDB" id="EMD-29760"/>
<dbReference type="EMDB" id="EMD-29771"/>
<dbReference type="EMDB" id="EMD-31465"/>
<dbReference type="EMDB" id="EMD-33329"/>
<dbReference type="EMDB" id="EMD-33330"/>
<dbReference type="EMDB" id="EMD-35370"/>
<dbReference type="EMDB" id="EMD-35371"/>
<dbReference type="EMDB" id="EMD-35375"/>
<dbReference type="EMDB" id="EMD-35413"/>
<dbReference type="EMDB" id="EMD-35414"/>
<dbReference type="EMDB" id="EMD-35596"/>
<dbReference type="EMDB" id="EMD-35597"/>
<dbReference type="EMDB" id="EMD-35599"/>
<dbReference type="EMDB" id="EMD-35639"/>
<dbReference type="EMDB" id="EMD-35649"/>
<dbReference type="EMDB" id="EMD-35651"/>
<dbReference type="EMDB" id="EMD-35672"/>
<dbReference type="EMDB" id="EMD-35673"/>
<dbReference type="EMDB" id="EMD-36178"/>
<dbReference type="EMDB" id="EMD-36179"/>
<dbReference type="EMDB" id="EMD-36180"/>
<dbReference type="EMDB" id="EMD-36181"/>
<dbReference type="EMDB" id="EMD-36838"/>
<dbReference type="EMDB" id="EMD-38629"/>
<dbReference type="EMDB" id="EMD-38630"/>
<dbReference type="EMDB" id="EMD-38631"/>
<dbReference type="EMDB" id="EMD-3883"/>
<dbReference type="EMDB" id="EMD-39455"/>
<dbReference type="EMDB" id="EMD-39456"/>
<dbReference type="EMDB" id="EMD-40205"/>
<dbReference type="EMDB" id="EMD-4070"/>
<dbReference type="EMDB" id="EMD-42351"/>
<dbReference type="EMDB" id="EMD-45170"/>
<dbReference type="EMDB" id="EMD-51132"/>
<dbReference type="EMDB" id="EMD-51452"/>
<dbReference type="EMDB" id="EMD-9701"/>
<dbReference type="EMDB" id="EMD-9702"/>
<dbReference type="EMDB" id="EMD-9703"/>
<dbReference type="SMR" id="P62910"/>
<dbReference type="BioGRID" id="112080">
    <property type="interactions" value="349"/>
</dbReference>
<dbReference type="ComplexPortal" id="CPX-5183">
    <property type="entry name" value="60S cytosolic large ribosomal subunit"/>
</dbReference>
<dbReference type="ComplexPortal" id="CPX-7664">
    <property type="entry name" value="60S cytosolic large ribosomal subunit, testis-specific variant"/>
</dbReference>
<dbReference type="ComplexPortal" id="CPX-7665">
    <property type="entry name" value="60S cytosolic large ribosomal subunit, striated muscle variant"/>
</dbReference>
<dbReference type="CORUM" id="P62910"/>
<dbReference type="FunCoup" id="P62910">
    <property type="interactions" value="2273"/>
</dbReference>
<dbReference type="IntAct" id="P62910">
    <property type="interactions" value="160"/>
</dbReference>
<dbReference type="MINT" id="P62910"/>
<dbReference type="STRING" id="9606.ENSP00000416429"/>
<dbReference type="CarbonylDB" id="P62910"/>
<dbReference type="GlyCosmos" id="P62910">
    <property type="glycosylation" value="1 site, 1 glycan"/>
</dbReference>
<dbReference type="GlyGen" id="P62910">
    <property type="glycosylation" value="1 site, 1 O-linked glycan (1 site)"/>
</dbReference>
<dbReference type="iPTMnet" id="P62910"/>
<dbReference type="MetOSite" id="P62910"/>
<dbReference type="PhosphoSitePlus" id="P62910"/>
<dbReference type="SwissPalm" id="P62910"/>
<dbReference type="BioMuta" id="RPL32"/>
<dbReference type="DMDM" id="51702809"/>
<dbReference type="jPOST" id="P62910"/>
<dbReference type="MassIVE" id="P62910"/>
<dbReference type="PaxDb" id="9606-ENSP00000416429"/>
<dbReference type="PeptideAtlas" id="P62910"/>
<dbReference type="ProteomicsDB" id="57451"/>
<dbReference type="Pumba" id="P62910"/>
<dbReference type="TopDownProteomics" id="P62910"/>
<dbReference type="Antibodypedia" id="10834">
    <property type="antibodies" value="103 antibodies from 25 providers"/>
</dbReference>
<dbReference type="DNASU" id="6161"/>
<dbReference type="Ensembl" id="ENST00000396953.6">
    <property type="protein sequence ID" value="ENSP00000380156.2"/>
    <property type="gene ID" value="ENSG00000144713.13"/>
</dbReference>
<dbReference type="Ensembl" id="ENST00000396957.5">
    <property type="protein sequence ID" value="ENSP00000380158.1"/>
    <property type="gene ID" value="ENSG00000144713.13"/>
</dbReference>
<dbReference type="Ensembl" id="ENST00000429711.7">
    <property type="protein sequence ID" value="ENSP00000416429.2"/>
    <property type="gene ID" value="ENSG00000144713.13"/>
</dbReference>
<dbReference type="Ensembl" id="ENST00000435983.5">
    <property type="protein sequence ID" value="ENSP00000388674.1"/>
    <property type="gene ID" value="ENSG00000144713.13"/>
</dbReference>
<dbReference type="GeneID" id="6161"/>
<dbReference type="KEGG" id="hsa:6161"/>
<dbReference type="MANE-Select" id="ENST00000429711.7">
    <property type="protein sequence ID" value="ENSP00000416429.2"/>
    <property type="RefSeq nucleotide sequence ID" value="NM_000994.4"/>
    <property type="RefSeq protein sequence ID" value="NP_000985.1"/>
</dbReference>
<dbReference type="UCSC" id="uc003bxl.4">
    <property type="organism name" value="human"/>
</dbReference>
<dbReference type="AGR" id="HGNC:10336"/>
<dbReference type="CTD" id="6161"/>
<dbReference type="DisGeNET" id="6161"/>
<dbReference type="GeneCards" id="RPL32"/>
<dbReference type="HGNC" id="HGNC:10336">
    <property type="gene designation" value="RPL32"/>
</dbReference>
<dbReference type="HPA" id="ENSG00000144713">
    <property type="expression patterns" value="Low tissue specificity"/>
</dbReference>
<dbReference type="neXtProt" id="NX_P62910"/>
<dbReference type="OpenTargets" id="ENSG00000144713"/>
<dbReference type="PharmGKB" id="PA34719"/>
<dbReference type="VEuPathDB" id="HostDB:ENSG00000144713"/>
<dbReference type="eggNOG" id="KOG0878">
    <property type="taxonomic scope" value="Eukaryota"/>
</dbReference>
<dbReference type="GeneTree" id="ENSGT00940000153973"/>
<dbReference type="InParanoid" id="P62910"/>
<dbReference type="OMA" id="HPSGYEE"/>
<dbReference type="OrthoDB" id="268693at2759"/>
<dbReference type="PAN-GO" id="P62910">
    <property type="GO annotations" value="1 GO annotation based on evolutionary models"/>
</dbReference>
<dbReference type="PhylomeDB" id="P62910"/>
<dbReference type="TreeFam" id="TF314947"/>
<dbReference type="PathwayCommons" id="P62910"/>
<dbReference type="Reactome" id="R-HSA-156827">
    <property type="pathway name" value="L13a-mediated translational silencing of Ceruloplasmin expression"/>
</dbReference>
<dbReference type="Reactome" id="R-HSA-156902">
    <property type="pathway name" value="Peptide chain elongation"/>
</dbReference>
<dbReference type="Reactome" id="R-HSA-1799339">
    <property type="pathway name" value="SRP-dependent cotranslational protein targeting to membrane"/>
</dbReference>
<dbReference type="Reactome" id="R-HSA-192823">
    <property type="pathway name" value="Viral mRNA Translation"/>
</dbReference>
<dbReference type="Reactome" id="R-HSA-2408557">
    <property type="pathway name" value="Selenocysteine synthesis"/>
</dbReference>
<dbReference type="Reactome" id="R-HSA-6791226">
    <property type="pathway name" value="Major pathway of rRNA processing in the nucleolus and cytosol"/>
</dbReference>
<dbReference type="Reactome" id="R-HSA-72689">
    <property type="pathway name" value="Formation of a pool of free 40S subunits"/>
</dbReference>
<dbReference type="Reactome" id="R-HSA-72706">
    <property type="pathway name" value="GTP hydrolysis and joining of the 60S ribosomal subunit"/>
</dbReference>
<dbReference type="Reactome" id="R-HSA-72764">
    <property type="pathway name" value="Eukaryotic Translation Termination"/>
</dbReference>
<dbReference type="Reactome" id="R-HSA-9010553">
    <property type="pathway name" value="Regulation of expression of SLITs and ROBOs"/>
</dbReference>
<dbReference type="Reactome" id="R-HSA-9633012">
    <property type="pathway name" value="Response of EIF2AK4 (GCN2) to amino acid deficiency"/>
</dbReference>
<dbReference type="Reactome" id="R-HSA-975956">
    <property type="pathway name" value="Nonsense Mediated Decay (NMD) independent of the Exon Junction Complex (EJC)"/>
</dbReference>
<dbReference type="Reactome" id="R-HSA-975957">
    <property type="pathway name" value="Nonsense Mediated Decay (NMD) enhanced by the Exon Junction Complex (EJC)"/>
</dbReference>
<dbReference type="SignaLink" id="P62910"/>
<dbReference type="SIGNOR" id="P62910"/>
<dbReference type="BioGRID-ORCS" id="6161">
    <property type="hits" value="824 hits in 1101 CRISPR screens"/>
</dbReference>
<dbReference type="CD-CODE" id="232F8A39">
    <property type="entry name" value="P-body"/>
</dbReference>
<dbReference type="CD-CODE" id="91857CE7">
    <property type="entry name" value="Nucleolus"/>
</dbReference>
<dbReference type="CD-CODE" id="DEE660B4">
    <property type="entry name" value="Stress granule"/>
</dbReference>
<dbReference type="ChiTaRS" id="RPL32">
    <property type="organism name" value="human"/>
</dbReference>
<dbReference type="GeneWiki" id="RPL32"/>
<dbReference type="GenomeRNAi" id="6161"/>
<dbReference type="Pharos" id="P62910">
    <property type="development level" value="Tbio"/>
</dbReference>
<dbReference type="PRO" id="PR:P62910"/>
<dbReference type="Proteomes" id="UP000005640">
    <property type="component" value="Chromosome 3"/>
</dbReference>
<dbReference type="RNAct" id="P62910">
    <property type="molecule type" value="protein"/>
</dbReference>
<dbReference type="Bgee" id="ENSG00000144713">
    <property type="expression patterns" value="Expressed in cortical plate and 107 other cell types or tissues"/>
</dbReference>
<dbReference type="ExpressionAtlas" id="P62910">
    <property type="expression patterns" value="baseline and differential"/>
</dbReference>
<dbReference type="GO" id="GO:0005737">
    <property type="term" value="C:cytoplasm"/>
    <property type="evidence" value="ECO:0000303"/>
    <property type="project" value="ComplexPortal"/>
</dbReference>
<dbReference type="GO" id="GO:0005829">
    <property type="term" value="C:cytosol"/>
    <property type="evidence" value="ECO:0000304"/>
    <property type="project" value="Reactome"/>
</dbReference>
<dbReference type="GO" id="GO:0022625">
    <property type="term" value="C:cytosolic large ribosomal subunit"/>
    <property type="evidence" value="ECO:0000314"/>
    <property type="project" value="UniProtKB"/>
</dbReference>
<dbReference type="GO" id="GO:0022626">
    <property type="term" value="C:cytosolic ribosome"/>
    <property type="evidence" value="ECO:0000314"/>
    <property type="project" value="FlyBase"/>
</dbReference>
<dbReference type="GO" id="GO:0016020">
    <property type="term" value="C:membrane"/>
    <property type="evidence" value="ECO:0007005"/>
    <property type="project" value="UniProtKB"/>
</dbReference>
<dbReference type="GO" id="GO:0003723">
    <property type="term" value="F:RNA binding"/>
    <property type="evidence" value="ECO:0007005"/>
    <property type="project" value="UniProtKB"/>
</dbReference>
<dbReference type="GO" id="GO:0003735">
    <property type="term" value="F:structural constituent of ribosome"/>
    <property type="evidence" value="ECO:0000314"/>
    <property type="project" value="UniProtKB"/>
</dbReference>
<dbReference type="GO" id="GO:0002181">
    <property type="term" value="P:cytoplasmic translation"/>
    <property type="evidence" value="ECO:0000314"/>
    <property type="project" value="UniProtKB"/>
</dbReference>
<dbReference type="GO" id="GO:0006412">
    <property type="term" value="P:translation"/>
    <property type="evidence" value="ECO:0000303"/>
    <property type="project" value="UniProtKB"/>
</dbReference>
<dbReference type="CDD" id="cd00513">
    <property type="entry name" value="Ribosomal_L32_L32e"/>
    <property type="match status" value="1"/>
</dbReference>
<dbReference type="InterPro" id="IPR001515">
    <property type="entry name" value="Ribosomal_eL32"/>
</dbReference>
<dbReference type="InterPro" id="IPR018263">
    <property type="entry name" value="Ribosomal_eL32_CS"/>
</dbReference>
<dbReference type="InterPro" id="IPR036351">
    <property type="entry name" value="Ribosomal_eL32_sf"/>
</dbReference>
<dbReference type="PANTHER" id="PTHR23413">
    <property type="entry name" value="60S RIBOSOMAL PROTEIN L32 AND DNA-DIRECTED RNA POLYMERASE II, SUBUNIT N"/>
    <property type="match status" value="1"/>
</dbReference>
<dbReference type="PANTHER" id="PTHR23413:SF6">
    <property type="entry name" value="LARGE RIBOSOMAL SUBUNIT PROTEIN EL32"/>
    <property type="match status" value="1"/>
</dbReference>
<dbReference type="Pfam" id="PF01655">
    <property type="entry name" value="Ribosomal_L32e"/>
    <property type="match status" value="1"/>
</dbReference>
<dbReference type="SMART" id="SM01393">
    <property type="entry name" value="Ribosomal_L32e"/>
    <property type="match status" value="1"/>
</dbReference>
<dbReference type="SUPFAM" id="SSF52042">
    <property type="entry name" value="Ribosomal protein L32e"/>
    <property type="match status" value="1"/>
</dbReference>
<dbReference type="PROSITE" id="PS00580">
    <property type="entry name" value="RIBOSOMAL_L32E"/>
    <property type="match status" value="1"/>
</dbReference>
<feature type="initiator methionine" description="Removed" evidence="4">
    <location>
        <position position="1"/>
    </location>
</feature>
<feature type="chain" id="PRO_0000131113" description="Large ribosomal subunit protein eL32">
    <location>
        <begin position="2"/>
        <end position="135"/>
    </location>
</feature>
<feature type="modified residue" description="N6-succinyllysine" evidence="1">
    <location>
        <position position="50"/>
    </location>
</feature>
<feature type="modified residue" description="Phosphoserine" evidence="11">
    <location>
        <position position="62"/>
    </location>
</feature>
<feature type="cross-link" description="Glycyl lysine isopeptide (Lys-Gly) (interchain with G-Cter in SUMO2)" evidence="12">
    <location>
        <position position="9"/>
    </location>
</feature>
<sequence length="135" mass="15860">MAALRPLVKPKIVKKRTKKFIRHQSDRYVKIKRNWRKPRGIDNRVRRRFKGQILMPNIGYGSNKKTKHMLPSGFRKFLVHNVKELEVLLMCNKSYCAEIAHNVSSKNRKAIVERAAQLAIRVTNPNARLRSEENE</sequence>
<evidence type="ECO:0000250" key="1">
    <source>
        <dbReference type="UniProtKB" id="P62911"/>
    </source>
</evidence>
<evidence type="ECO:0000269" key="2">
    <source>
    </source>
</evidence>
<evidence type="ECO:0000269" key="3">
    <source>
    </source>
</evidence>
<evidence type="ECO:0000269" key="4">
    <source ref="7"/>
</evidence>
<evidence type="ECO:0000303" key="5">
    <source>
    </source>
</evidence>
<evidence type="ECO:0000305" key="6"/>
<evidence type="ECO:0007744" key="7">
    <source>
        <dbReference type="PDB" id="6LQM"/>
    </source>
</evidence>
<evidence type="ECO:0007744" key="8">
    <source>
        <dbReference type="PDB" id="6LSR"/>
    </source>
</evidence>
<evidence type="ECO:0007744" key="9">
    <source>
        <dbReference type="PDB" id="6LSS"/>
    </source>
</evidence>
<evidence type="ECO:0007744" key="10">
    <source>
        <dbReference type="PDB" id="6LU8"/>
    </source>
</evidence>
<evidence type="ECO:0007744" key="11">
    <source>
    </source>
</evidence>
<evidence type="ECO:0007744" key="12">
    <source>
    </source>
</evidence>
<proteinExistence type="evidence at protein level"/>
<gene>
    <name type="primary">RPL32</name>
    <name type="ORF">PP9932</name>
</gene>
<name>RL32_HUMAN</name>
<organism>
    <name type="scientific">Homo sapiens</name>
    <name type="common">Human</name>
    <dbReference type="NCBI Taxonomy" id="9606"/>
    <lineage>
        <taxon>Eukaryota</taxon>
        <taxon>Metazoa</taxon>
        <taxon>Chordata</taxon>
        <taxon>Craniata</taxon>
        <taxon>Vertebrata</taxon>
        <taxon>Euteleostomi</taxon>
        <taxon>Mammalia</taxon>
        <taxon>Eutheria</taxon>
        <taxon>Euarchontoglires</taxon>
        <taxon>Primates</taxon>
        <taxon>Haplorrhini</taxon>
        <taxon>Catarrhini</taxon>
        <taxon>Hominidae</taxon>
        <taxon>Homo</taxon>
    </lineage>
</organism>
<reference key="1">
    <citation type="journal article" date="1985" name="Nucleic Acids Res.">
        <title>A processed pseudogene in an intron of the HLA-DP beta 1 chain gene is a member of the ribosomal protein L32 gene family.</title>
        <authorList>
            <person name="Young J.A.T."/>
            <person name="Trowsdale J."/>
        </authorList>
    </citation>
    <scope>NUCLEOTIDE SEQUENCE [MRNA]</scope>
</reference>
<reference key="2">
    <citation type="journal article" date="2002" name="Genome Res.">
        <title>The human ribosomal protein genes: sequencing and comparative analysis of 73 genes.</title>
        <authorList>
            <person name="Yoshihama M."/>
            <person name="Uechi T."/>
            <person name="Asakawa S."/>
            <person name="Kawasaki K."/>
            <person name="Kato S."/>
            <person name="Higa S."/>
            <person name="Maeda N."/>
            <person name="Minoshima S."/>
            <person name="Tanaka T."/>
            <person name="Shimizu N."/>
            <person name="Kenmochi N."/>
        </authorList>
    </citation>
    <scope>NUCLEOTIDE SEQUENCE [GENOMIC DNA]</scope>
</reference>
<reference key="3">
    <citation type="journal article" date="2004" name="Proc. Natl. Acad. Sci. U.S.A.">
        <title>Large-scale cDNA transfection screening for genes related to cancer development and progression.</title>
        <authorList>
            <person name="Wan D."/>
            <person name="Gong Y."/>
            <person name="Qin W."/>
            <person name="Zhang P."/>
            <person name="Li J."/>
            <person name="Wei L."/>
            <person name="Zhou X."/>
            <person name="Li H."/>
            <person name="Qiu X."/>
            <person name="Zhong F."/>
            <person name="He L."/>
            <person name="Yu J."/>
            <person name="Yao G."/>
            <person name="Jiang H."/>
            <person name="Qian L."/>
            <person name="Yu Y."/>
            <person name="Shu H."/>
            <person name="Chen X."/>
            <person name="Xu H."/>
            <person name="Guo M."/>
            <person name="Pan Z."/>
            <person name="Chen Y."/>
            <person name="Ge C."/>
            <person name="Yang S."/>
            <person name="Gu J."/>
        </authorList>
    </citation>
    <scope>NUCLEOTIDE SEQUENCE [LARGE SCALE MRNA]</scope>
</reference>
<reference key="4">
    <citation type="journal article" date="2004" name="Nat. Genet.">
        <title>Complete sequencing and characterization of 21,243 full-length human cDNAs.</title>
        <authorList>
            <person name="Ota T."/>
            <person name="Suzuki Y."/>
            <person name="Nishikawa T."/>
            <person name="Otsuki T."/>
            <person name="Sugiyama T."/>
            <person name="Irie R."/>
            <person name="Wakamatsu A."/>
            <person name="Hayashi K."/>
            <person name="Sato H."/>
            <person name="Nagai K."/>
            <person name="Kimura K."/>
            <person name="Makita H."/>
            <person name="Sekine M."/>
            <person name="Obayashi M."/>
            <person name="Nishi T."/>
            <person name="Shibahara T."/>
            <person name="Tanaka T."/>
            <person name="Ishii S."/>
            <person name="Yamamoto J."/>
            <person name="Saito K."/>
            <person name="Kawai Y."/>
            <person name="Isono Y."/>
            <person name="Nakamura Y."/>
            <person name="Nagahari K."/>
            <person name="Murakami K."/>
            <person name="Yasuda T."/>
            <person name="Iwayanagi T."/>
            <person name="Wagatsuma M."/>
            <person name="Shiratori A."/>
            <person name="Sudo H."/>
            <person name="Hosoiri T."/>
            <person name="Kaku Y."/>
            <person name="Kodaira H."/>
            <person name="Kondo H."/>
            <person name="Sugawara M."/>
            <person name="Takahashi M."/>
            <person name="Kanda K."/>
            <person name="Yokoi T."/>
            <person name="Furuya T."/>
            <person name="Kikkawa E."/>
            <person name="Omura Y."/>
            <person name="Abe K."/>
            <person name="Kamihara K."/>
            <person name="Katsuta N."/>
            <person name="Sato K."/>
            <person name="Tanikawa M."/>
            <person name="Yamazaki M."/>
            <person name="Ninomiya K."/>
            <person name="Ishibashi T."/>
            <person name="Yamashita H."/>
            <person name="Murakawa K."/>
            <person name="Fujimori K."/>
            <person name="Tanai H."/>
            <person name="Kimata M."/>
            <person name="Watanabe M."/>
            <person name="Hiraoka S."/>
            <person name="Chiba Y."/>
            <person name="Ishida S."/>
            <person name="Ono Y."/>
            <person name="Takiguchi S."/>
            <person name="Watanabe S."/>
            <person name="Yosida M."/>
            <person name="Hotuta T."/>
            <person name="Kusano J."/>
            <person name="Kanehori K."/>
            <person name="Takahashi-Fujii A."/>
            <person name="Hara H."/>
            <person name="Tanase T.-O."/>
            <person name="Nomura Y."/>
            <person name="Togiya S."/>
            <person name="Komai F."/>
            <person name="Hara R."/>
            <person name="Takeuchi K."/>
            <person name="Arita M."/>
            <person name="Imose N."/>
            <person name="Musashino K."/>
            <person name="Yuuki H."/>
            <person name="Oshima A."/>
            <person name="Sasaki N."/>
            <person name="Aotsuka S."/>
            <person name="Yoshikawa Y."/>
            <person name="Matsunawa H."/>
            <person name="Ichihara T."/>
            <person name="Shiohata N."/>
            <person name="Sano S."/>
            <person name="Moriya S."/>
            <person name="Momiyama H."/>
            <person name="Satoh N."/>
            <person name="Takami S."/>
            <person name="Terashima Y."/>
            <person name="Suzuki O."/>
            <person name="Nakagawa S."/>
            <person name="Senoh A."/>
            <person name="Mizoguchi H."/>
            <person name="Goto Y."/>
            <person name="Shimizu F."/>
            <person name="Wakebe H."/>
            <person name="Hishigaki H."/>
            <person name="Watanabe T."/>
            <person name="Sugiyama A."/>
            <person name="Takemoto M."/>
            <person name="Kawakami B."/>
            <person name="Yamazaki M."/>
            <person name="Watanabe K."/>
            <person name="Kumagai A."/>
            <person name="Itakura S."/>
            <person name="Fukuzumi Y."/>
            <person name="Fujimori Y."/>
            <person name="Komiyama M."/>
            <person name="Tashiro H."/>
            <person name="Tanigami A."/>
            <person name="Fujiwara T."/>
            <person name="Ono T."/>
            <person name="Yamada K."/>
            <person name="Fujii Y."/>
            <person name="Ozaki K."/>
            <person name="Hirao M."/>
            <person name="Ohmori Y."/>
            <person name="Kawabata A."/>
            <person name="Hikiji T."/>
            <person name="Kobatake N."/>
            <person name="Inagaki H."/>
            <person name="Ikema Y."/>
            <person name="Okamoto S."/>
            <person name="Okitani R."/>
            <person name="Kawakami T."/>
            <person name="Noguchi S."/>
            <person name="Itoh T."/>
            <person name="Shigeta K."/>
            <person name="Senba T."/>
            <person name="Matsumura K."/>
            <person name="Nakajima Y."/>
            <person name="Mizuno T."/>
            <person name="Morinaga M."/>
            <person name="Sasaki M."/>
            <person name="Togashi T."/>
            <person name="Oyama M."/>
            <person name="Hata H."/>
            <person name="Watanabe M."/>
            <person name="Komatsu T."/>
            <person name="Mizushima-Sugano J."/>
            <person name="Satoh T."/>
            <person name="Shirai Y."/>
            <person name="Takahashi Y."/>
            <person name="Nakagawa K."/>
            <person name="Okumura K."/>
            <person name="Nagase T."/>
            <person name="Nomura N."/>
            <person name="Kikuchi H."/>
            <person name="Masuho Y."/>
            <person name="Yamashita R."/>
            <person name="Nakai K."/>
            <person name="Yada T."/>
            <person name="Nakamura Y."/>
            <person name="Ohara O."/>
            <person name="Isogai T."/>
            <person name="Sugano S."/>
        </authorList>
    </citation>
    <scope>NUCLEOTIDE SEQUENCE [LARGE SCALE MRNA]</scope>
    <source>
        <tissue>Thymus</tissue>
    </source>
</reference>
<reference key="5">
    <citation type="submission" date="2005-07" db="EMBL/GenBank/DDBJ databases">
        <authorList>
            <person name="Mural R.J."/>
            <person name="Istrail S."/>
            <person name="Sutton G.G."/>
            <person name="Florea L."/>
            <person name="Halpern A.L."/>
            <person name="Mobarry C.M."/>
            <person name="Lippert R."/>
            <person name="Walenz B."/>
            <person name="Shatkay H."/>
            <person name="Dew I."/>
            <person name="Miller J.R."/>
            <person name="Flanigan M.J."/>
            <person name="Edwards N.J."/>
            <person name="Bolanos R."/>
            <person name="Fasulo D."/>
            <person name="Halldorsson B.V."/>
            <person name="Hannenhalli S."/>
            <person name="Turner R."/>
            <person name="Yooseph S."/>
            <person name="Lu F."/>
            <person name="Nusskern D.R."/>
            <person name="Shue B.C."/>
            <person name="Zheng X.H."/>
            <person name="Zhong F."/>
            <person name="Delcher A.L."/>
            <person name="Huson D.H."/>
            <person name="Kravitz S.A."/>
            <person name="Mouchard L."/>
            <person name="Reinert K."/>
            <person name="Remington K.A."/>
            <person name="Clark A.G."/>
            <person name="Waterman M.S."/>
            <person name="Eichler E.E."/>
            <person name="Adams M.D."/>
            <person name="Hunkapiller M.W."/>
            <person name="Myers E.W."/>
            <person name="Venter J.C."/>
        </authorList>
    </citation>
    <scope>NUCLEOTIDE SEQUENCE [LARGE SCALE GENOMIC DNA]</scope>
</reference>
<reference key="6">
    <citation type="journal article" date="2004" name="Genome Res.">
        <title>The status, quality, and expansion of the NIH full-length cDNA project: the Mammalian Gene Collection (MGC).</title>
        <authorList>
            <consortium name="The MGC Project Team"/>
        </authorList>
    </citation>
    <scope>NUCLEOTIDE SEQUENCE [LARGE SCALE MRNA]</scope>
    <source>
        <tissue>Placenta</tissue>
    </source>
</reference>
<reference key="7">
    <citation type="submission" date="2008-03" db="UniProtKB">
        <authorList>
            <person name="Bienvenut W.V."/>
            <person name="Vousden K.H."/>
            <person name="Lukashchuk N."/>
        </authorList>
    </citation>
    <scope>PROTEIN SEQUENCE OF 2-11; 84-93 AND 115-121</scope>
    <scope>CLEAVAGE OF INITIATOR METHIONINE</scope>
    <scope>IDENTIFICATION BY MASS SPECTROMETRY</scope>
    <source>
        <tissue>Lung carcinoma</tissue>
    </source>
</reference>
<reference key="8">
    <citation type="journal article" date="2003" name="Nature">
        <title>Proteomic characterization of the human centrosome by protein correlation profiling.</title>
        <authorList>
            <person name="Andersen J.S."/>
            <person name="Wilkinson C.J."/>
            <person name="Mayor T."/>
            <person name="Mortensen P."/>
            <person name="Nigg E.A."/>
            <person name="Mann M."/>
        </authorList>
    </citation>
    <scope>IDENTIFICATION BY MASS SPECTROMETRY</scope>
    <source>
        <tissue>Lymphoblast</tissue>
    </source>
</reference>
<reference key="9">
    <citation type="journal article" date="2011" name="BMC Syst. Biol.">
        <title>Initial characterization of the human central proteome.</title>
        <authorList>
            <person name="Burkard T.R."/>
            <person name="Planyavsky M."/>
            <person name="Kaupe I."/>
            <person name="Breitwieser F.P."/>
            <person name="Buerckstuemmer T."/>
            <person name="Bennett K.L."/>
            <person name="Superti-Furga G."/>
            <person name="Colinge J."/>
        </authorList>
    </citation>
    <scope>IDENTIFICATION BY MASS SPECTROMETRY [LARGE SCALE ANALYSIS]</scope>
</reference>
<reference key="10">
    <citation type="journal article" date="2013" name="J. Proteome Res.">
        <title>Toward a comprehensive characterization of a human cancer cell phosphoproteome.</title>
        <authorList>
            <person name="Zhou H."/>
            <person name="Di Palma S."/>
            <person name="Preisinger C."/>
            <person name="Peng M."/>
            <person name="Polat A.N."/>
            <person name="Heck A.J."/>
            <person name="Mohammed S."/>
        </authorList>
    </citation>
    <scope>PHOSPHORYLATION [LARGE SCALE ANALYSIS] AT SER-62</scope>
    <scope>IDENTIFICATION BY MASS SPECTROMETRY [LARGE SCALE ANALYSIS]</scope>
    <source>
        <tissue>Erythroleukemia</tissue>
    </source>
</reference>
<reference key="11">
    <citation type="journal article" date="2014" name="Curr. Opin. Struct. Biol.">
        <title>A new system for naming ribosomal proteins.</title>
        <authorList>
            <person name="Ban N."/>
            <person name="Beckmann R."/>
            <person name="Cate J.H.D."/>
            <person name="Dinman J.D."/>
            <person name="Dragon F."/>
            <person name="Ellis S.R."/>
            <person name="Lafontaine D.L.J."/>
            <person name="Lindahl L."/>
            <person name="Liljas A."/>
            <person name="Lipton J.M."/>
            <person name="McAlear M.A."/>
            <person name="Moore P.B."/>
            <person name="Noller H.F."/>
            <person name="Ortega J."/>
            <person name="Panse V.G."/>
            <person name="Ramakrishnan V."/>
            <person name="Spahn C.M.T."/>
            <person name="Steitz T.A."/>
            <person name="Tchorzewski M."/>
            <person name="Tollervey D."/>
            <person name="Warren A.J."/>
            <person name="Williamson J.R."/>
            <person name="Wilson D."/>
            <person name="Yonath A."/>
            <person name="Yusupov M."/>
        </authorList>
    </citation>
    <scope>NOMENCLATURE</scope>
</reference>
<reference key="12">
    <citation type="journal article" date="2015" name="Proteomics">
        <title>N-terminome analysis of the human mitochondrial proteome.</title>
        <authorList>
            <person name="Vaca Jacome A.S."/>
            <person name="Rabilloud T."/>
            <person name="Schaeffer-Reiss C."/>
            <person name="Rompais M."/>
            <person name="Ayoub D."/>
            <person name="Lane L."/>
            <person name="Bairoch A."/>
            <person name="Van Dorsselaer A."/>
            <person name="Carapito C."/>
        </authorList>
    </citation>
    <scope>IDENTIFICATION BY MASS SPECTROMETRY [LARGE SCALE ANALYSIS]</scope>
</reference>
<reference key="13">
    <citation type="journal article" date="2017" name="Nat. Struct. Mol. Biol.">
        <title>Site-specific mapping of the human SUMO proteome reveals co-modification with phosphorylation.</title>
        <authorList>
            <person name="Hendriks I.A."/>
            <person name="Lyon D."/>
            <person name="Young C."/>
            <person name="Jensen L.J."/>
            <person name="Vertegaal A.C."/>
            <person name="Nielsen M.L."/>
        </authorList>
    </citation>
    <scope>SUMOYLATION [LARGE SCALE ANALYSIS] AT LYS-9</scope>
    <scope>IDENTIFICATION BY MASS SPECTROMETRY [LARGE SCALE ANALYSIS]</scope>
</reference>
<reference key="14">
    <citation type="journal article" date="2013" name="Nature">
        <title>Structures of the human and Drosophila 80S ribosome.</title>
        <authorList>
            <person name="Anger A.M."/>
            <person name="Armache J.P."/>
            <person name="Berninghausen O."/>
            <person name="Habeck M."/>
            <person name="Subklewe M."/>
            <person name="Wilson D.N."/>
            <person name="Beckmann R."/>
        </authorList>
    </citation>
    <scope>STRUCTURE BY ELECTRON MICROSCOPY (5.0 ANGSTROMS)</scope>
    <scope>FUNCTION</scope>
    <scope>SUBUNIT</scope>
    <scope>SUBCELLULAR LOCATION</scope>
</reference>
<reference evidence="7 8 9 10" key="15">
    <citation type="journal article" date="2020" name="Nat. Commun.">
        <title>Structural snapshots of human pre-60S ribosomal particles before and after nuclear export.</title>
        <authorList>
            <person name="Liang X."/>
            <person name="Zuo M.Q."/>
            <person name="Zhang Y."/>
            <person name="Li N."/>
            <person name="Ma C."/>
            <person name="Dong M.Q."/>
            <person name="Gao N."/>
        </authorList>
    </citation>
    <scope>STRUCTURE BY ELECTRON MICROSCOPY (3.09 ANGSTROMS)</scope>
    <scope>FUNCTION</scope>
    <scope>SUBUNIT</scope>
</reference>
<accession>P62910</accession>
<accession>B2R4Q3</accession>
<accession>P02433</accession>
<protein>
    <recommendedName>
        <fullName evidence="5">Large ribosomal subunit protein eL32</fullName>
    </recommendedName>
    <alternativeName>
        <fullName>60S ribosomal protein L32</fullName>
    </alternativeName>
</protein>
<keyword id="KW-0002">3D-structure</keyword>
<keyword id="KW-0963">Cytoplasm</keyword>
<keyword id="KW-0903">Direct protein sequencing</keyword>
<keyword id="KW-1017">Isopeptide bond</keyword>
<keyword id="KW-0597">Phosphoprotein</keyword>
<keyword id="KW-1267">Proteomics identification</keyword>
<keyword id="KW-1185">Reference proteome</keyword>
<keyword id="KW-0687">Ribonucleoprotein</keyword>
<keyword id="KW-0689">Ribosomal protein</keyword>
<keyword id="KW-0832">Ubl conjugation</keyword>
<comment type="function">
    <text evidence="2 3">Component of the large ribosomal subunit (PubMed:23636399, PubMed:32669547). The ribosome is a large ribonucleoprotein complex responsible for the synthesis of proteins in the cell (PubMed:23636399, PubMed:32669547).</text>
</comment>
<comment type="subunit">
    <text evidence="2 3">Component of the large ribosomal subunit.</text>
</comment>
<comment type="subcellular location">
    <subcellularLocation>
        <location evidence="2">Cytoplasm</location>
    </subcellularLocation>
</comment>
<comment type="similarity">
    <text evidence="6">Belongs to the eukaryotic ribosomal protein eL32 family.</text>
</comment>